<organism>
    <name type="scientific">Alternaria alternata</name>
    <name type="common">Alternaria rot fungus</name>
    <name type="synonym">Torula alternata</name>
    <dbReference type="NCBI Taxonomy" id="5599"/>
    <lineage>
        <taxon>Eukaryota</taxon>
        <taxon>Fungi</taxon>
        <taxon>Dikarya</taxon>
        <taxon>Ascomycota</taxon>
        <taxon>Pezizomycotina</taxon>
        <taxon>Dothideomycetes</taxon>
        <taxon>Pleosporomycetidae</taxon>
        <taxon>Pleosporales</taxon>
        <taxon>Pleosporineae</taxon>
        <taxon>Pleosporaceae</taxon>
        <taxon>Alternaria</taxon>
        <taxon>Alternaria sect. Alternaria</taxon>
        <taxon>Alternaria alternata complex</taxon>
    </lineage>
</organism>
<name>ALTA1_ALTAL</name>
<evidence type="ECO:0000255" key="1">
    <source>
        <dbReference type="PROSITE-ProRule" id="PRU01243"/>
    </source>
</evidence>
<evidence type="ECO:0000269" key="2">
    <source>
    </source>
</evidence>
<evidence type="ECO:0000269" key="3">
    <source>
    </source>
</evidence>
<evidence type="ECO:0000269" key="4">
    <source>
    </source>
</evidence>
<evidence type="ECO:0000269" key="5">
    <source>
    </source>
</evidence>
<evidence type="ECO:0000269" key="6">
    <source>
    </source>
</evidence>
<evidence type="ECO:0000269" key="7">
    <source>
    </source>
</evidence>
<evidence type="ECO:0000305" key="8"/>
<evidence type="ECO:0000305" key="9">
    <source>
    </source>
</evidence>
<evidence type="ECO:0007744" key="10">
    <source>
        <dbReference type="PDB" id="3V0R"/>
    </source>
</evidence>
<evidence type="ECO:0007744" key="11">
    <source>
        <dbReference type="PDB" id="4AUD"/>
    </source>
</evidence>
<evidence type="ECO:0007829" key="12">
    <source>
        <dbReference type="PDB" id="3V0R"/>
    </source>
</evidence>
<evidence type="ECO:0007829" key="13">
    <source>
        <dbReference type="PDB" id="4AUD"/>
    </source>
</evidence>
<comment type="function">
    <text evidence="6">May bind and inhibit the beta-glucanase activity of host plant thaumatin-like proteins.</text>
</comment>
<comment type="subunit">
    <text evidence="4 5">Homodimer; disulfide-linked.</text>
</comment>
<comment type="interaction">
    <interactant intactId="EBI-9212161">
        <id>P79085</id>
    </interactant>
    <interactant intactId="EBI-9212168">
        <id>P81370</id>
        <label>tlp</label>
    </interactant>
    <organismsDiffer>true</organismsDiffer>
    <experiments>3</experiments>
</comment>
<comment type="subcellular location">
    <subcellularLocation>
        <location evidence="2 6">Spore wall</location>
    </subcellularLocation>
    <subcellularLocation>
        <location evidence="3 6 7">Secreted</location>
    </subcellularLocation>
</comment>
<comment type="allergen">
    <text evidence="7 9">Causes an allergic reaction in human.</text>
</comment>
<comment type="similarity">
    <text evidence="8">Belongs to the ALTA1 family.</text>
</comment>
<reference key="1">
    <citation type="journal article" date="1996" name="Int. Arch. Allergy Immunol.">
        <title>Isolation and expression of a cDNA clone encoding an Alternaria alternata Alt a 1 subunit.</title>
        <authorList>
            <person name="De Vouge M.W."/>
            <person name="Thaker A.J."/>
            <person name="Curran I.H."/>
            <person name="Zhang L."/>
            <person name="Muradia G."/>
            <person name="Rode H."/>
            <person name="Vijay H.M."/>
        </authorList>
    </citation>
    <scope>NUCLEOTIDE SEQUENCE [MRNA]</scope>
    <scope>PARTIAL PROTEIN SEQUENCE</scope>
    <scope>SUBCELLULAR LOCATION</scope>
    <scope>ALLERGEN</scope>
</reference>
<reference key="2">
    <citation type="submission" date="1996-12" db="EMBL/GenBank/DDBJ databases">
        <authorList>
            <person name="Unger A.M."/>
            <person name="Lechenauer E."/>
            <person name="Simon B."/>
            <person name="Oberkofler H."/>
            <person name="Probst G."/>
            <person name="Achatz G."/>
            <person name="Breitenbach M."/>
        </authorList>
    </citation>
    <scope>NUCLEOTIDE SEQUENCE [MRNA]</scope>
    <source>
        <strain>08-0203-Berlin</strain>
    </source>
</reference>
<reference key="3">
    <citation type="journal article" date="2012" name="FEMS Microbiol. Lett.">
        <title>Expression of Alt a 1 allergen from Alternaria alternata in the yeast Yarrowia lipolytica.</title>
        <authorList>
            <person name="Morin M."/>
            <person name="Asturias J.A."/>
            <person name="Dominguez A."/>
        </authorList>
    </citation>
    <scope>SUBCELLULAR LOCATION</scope>
    <scope>ALLERGEN</scope>
</reference>
<reference key="4">
    <citation type="journal article" date="2012" name="J. Allergy Clin. Immunol.">
        <title>Predominant localization of the major Alternaria allergen Alt a 1 in the cell wall of airborne spores.</title>
        <authorList>
            <person name="Twaroch T.E."/>
            <person name="Arcalis E."/>
            <person name="Sterflinger K."/>
            <person name="Stoeger E."/>
            <person name="Swoboda I."/>
            <person name="Valenta R."/>
        </authorList>
    </citation>
    <scope>SUBCELLULAR LOCATION</scope>
</reference>
<reference key="5">
    <citation type="journal article" date="2014" name="FEBS Lett.">
        <title>Alt a 1 from Alternaria interacts with PR5 thaumatin-like proteins.</title>
        <authorList>
            <person name="Gomez-Casado C."/>
            <person name="Murua-Garcia A."/>
            <person name="Garrido-Arandia M."/>
            <person name="Gonzalez-Melendi P."/>
            <person name="Sanchez-Monge R."/>
            <person name="Barber D."/>
            <person name="Pacios L.F."/>
            <person name="Diaz-Perales A."/>
        </authorList>
    </citation>
    <scope>FUNCTION</scope>
    <scope>SUBCELLULAR LOCATION</scope>
</reference>
<reference key="6">
    <citation type="journal article" date="2014" name="Biomol. NMR. Assign.">
        <title>Backbone resonance assignment of Alt a 1, a unique beta-barrel protein and the major allergen of Alternaria alternata.</title>
        <authorList>
            <person name="Wagner G.E."/>
            <person name="Gutfreund S."/>
            <person name="Fauland K."/>
            <person name="Keller W."/>
            <person name="Valenta R."/>
            <person name="Zangger K."/>
        </authorList>
    </citation>
    <scope>STRUCTURE BY NMR OF 26-157</scope>
    <scope>SUBUNIT</scope>
</reference>
<reference evidence="10" key="7">
    <citation type="journal article" date="2012" name="J. Allergy Clin. Immunol.">
        <title>Alternaria alternata allergen Alt a 1: a unique beta-barrel protein dimer found exclusively in fungi.</title>
        <authorList>
            <person name="Chruszcz M."/>
            <person name="Chapman M.D."/>
            <person name="Osinski T."/>
            <person name="Solberg R."/>
            <person name="Demas M."/>
            <person name="Porebski P.J."/>
            <person name="Majorek K.A."/>
            <person name="Pomes A."/>
            <person name="Minor W."/>
        </authorList>
    </citation>
    <scope>X-RAY CRYSTALLOGRAPHY (1.90 ANGSTROMS) OF 26-157</scope>
    <scope>SUBUNIT</scope>
</reference>
<reference evidence="11" key="8">
    <citation type="submission" date="2012-05" db="PDB data bank">
        <title>Crystal Structure of Major Allergen of Alternaria Alternata Alt a 1.</title>
        <authorList>
            <person name="Mechaly A.E."/>
            <person name="Ibanez De Opakua A."/>
            <person name="Bermejo I."/>
            <person name="Asturias J."/>
            <person name="Viguera A.R."/>
        </authorList>
    </citation>
    <scope>X-RAY CRYSTALLOGRAPHY (2.67 ANGSTROMS) OF 29-157</scope>
</reference>
<sequence length="157" mass="16980">MQFTTIASLFAAAGLAAAAPLESRQDTASCPVTTEGDYVWKISEFYGRKPEGTYYNSLGFNIKATNGGTLDFTCSAQADKLEDHKWYSCGENSFMDFSFDSDRSGLLLKQKVSDDITYVATATLPNYCRAGGNGPKDFVCQGVADAYITLVTLPKSS</sequence>
<gene>
    <name type="primary">ALTA1</name>
</gene>
<accession>P79085</accession>
<dbReference type="EMBL" id="U86752">
    <property type="protein sequence ID" value="AAB47552.1"/>
    <property type="molecule type" value="mRNA"/>
</dbReference>
<dbReference type="EMBL" id="U82633">
    <property type="protein sequence ID" value="AAB40400.1"/>
    <property type="molecule type" value="mRNA"/>
</dbReference>
<dbReference type="RefSeq" id="XP_018383182.1">
    <property type="nucleotide sequence ID" value="XM_018534774.1"/>
</dbReference>
<dbReference type="PDB" id="3V0R">
    <property type="method" value="X-ray"/>
    <property type="resolution" value="1.90 A"/>
    <property type="chains" value="A=26-157"/>
</dbReference>
<dbReference type="PDB" id="4AUD">
    <property type="method" value="X-ray"/>
    <property type="resolution" value="2.67 A"/>
    <property type="chains" value="A/B=29-157"/>
</dbReference>
<dbReference type="PDBsum" id="3V0R"/>
<dbReference type="PDBsum" id="4AUD"/>
<dbReference type="BMRB" id="P79085"/>
<dbReference type="SMR" id="P79085"/>
<dbReference type="IntAct" id="P79085">
    <property type="interactions" value="3"/>
</dbReference>
<dbReference type="MINT" id="P79085"/>
<dbReference type="Allergome" id="11">
    <property type="allergen name" value="Alt a 1.0101"/>
</dbReference>
<dbReference type="Allergome" id="722">
    <property type="allergen name" value="Alt a 1"/>
</dbReference>
<dbReference type="KEGG" id="aalt:CC77DRAFT_941148"/>
<dbReference type="VEuPathDB" id="FungiDB:CC77DRAFT_941148"/>
<dbReference type="OMA" id="NDQVCET"/>
<dbReference type="EvolutionaryTrace" id="P79085"/>
<dbReference type="GO" id="GO:0005619">
    <property type="term" value="C:ascospore wall"/>
    <property type="evidence" value="ECO:0000314"/>
    <property type="project" value="UniProtKB"/>
</dbReference>
<dbReference type="GO" id="GO:0005576">
    <property type="term" value="C:extracellular region"/>
    <property type="evidence" value="ECO:0000314"/>
    <property type="project" value="UniProtKB"/>
</dbReference>
<dbReference type="CDD" id="cd12798">
    <property type="entry name" value="Alt_A1"/>
    <property type="match status" value="1"/>
</dbReference>
<dbReference type="Gene3D" id="2.40.350.20">
    <property type="match status" value="1"/>
</dbReference>
<dbReference type="InterPro" id="IPR032382">
    <property type="entry name" value="AltA1"/>
</dbReference>
<dbReference type="Pfam" id="PF16541">
    <property type="entry name" value="AltA1"/>
    <property type="match status" value="1"/>
</dbReference>
<dbReference type="PROSITE" id="PS51895">
    <property type="entry name" value="AA1"/>
    <property type="match status" value="1"/>
</dbReference>
<protein>
    <recommendedName>
        <fullName>Major allergen Alt a 1</fullName>
    </recommendedName>
    <allergenName>Alt a 1</allergenName>
</protein>
<keyword id="KW-0002">3D-structure</keyword>
<keyword id="KW-0020">Allergen</keyword>
<keyword id="KW-0903">Direct protein sequencing</keyword>
<keyword id="KW-1015">Disulfide bond</keyword>
<keyword id="KW-0964">Secreted</keyword>
<keyword id="KW-0732">Signal</keyword>
<proteinExistence type="evidence at protein level"/>
<feature type="signal peptide">
    <location>
        <begin position="1"/>
        <end position="18"/>
    </location>
</feature>
<feature type="chain" id="PRO_0000020699" description="Major allergen Alt a 1">
    <location>
        <begin position="19"/>
        <end position="157"/>
    </location>
</feature>
<feature type="domain" description="AA1-like" evidence="1">
    <location>
        <begin position="35"/>
        <end position="153"/>
    </location>
</feature>
<feature type="disulfide bond" description="Interchain" evidence="4 10">
    <location>
        <position position="30"/>
    </location>
</feature>
<feature type="disulfide bond" evidence="1 4 10 11">
    <location>
        <begin position="74"/>
        <end position="89"/>
    </location>
</feature>
<feature type="disulfide bond" evidence="1 4 10 11">
    <location>
        <begin position="128"/>
        <end position="140"/>
    </location>
</feature>
<feature type="strand" evidence="12">
    <location>
        <begin position="30"/>
        <end position="32"/>
    </location>
</feature>
<feature type="strand" evidence="12">
    <location>
        <begin position="39"/>
        <end position="49"/>
    </location>
</feature>
<feature type="strand" evidence="12">
    <location>
        <begin position="52"/>
        <end position="54"/>
    </location>
</feature>
<feature type="strand" evidence="12">
    <location>
        <begin position="56"/>
        <end position="67"/>
    </location>
</feature>
<feature type="strand" evidence="12">
    <location>
        <begin position="71"/>
        <end position="77"/>
    </location>
</feature>
<feature type="strand" evidence="12">
    <location>
        <begin position="87"/>
        <end position="92"/>
    </location>
</feature>
<feature type="strand" evidence="12">
    <location>
        <begin position="96"/>
        <end position="100"/>
    </location>
</feature>
<feature type="helix" evidence="12">
    <location>
        <begin position="101"/>
        <end position="103"/>
    </location>
</feature>
<feature type="strand" evidence="12">
    <location>
        <begin position="105"/>
        <end position="111"/>
    </location>
</feature>
<feature type="strand" evidence="12">
    <location>
        <begin position="113"/>
        <end position="115"/>
    </location>
</feature>
<feature type="strand" evidence="12">
    <location>
        <begin position="117"/>
        <end position="123"/>
    </location>
</feature>
<feature type="strand" evidence="12">
    <location>
        <begin position="126"/>
        <end position="130"/>
    </location>
</feature>
<feature type="strand" evidence="12">
    <location>
        <begin position="132"/>
        <end position="134"/>
    </location>
</feature>
<feature type="strand" evidence="12">
    <location>
        <begin position="138"/>
        <end position="144"/>
    </location>
</feature>
<feature type="strand" evidence="12">
    <location>
        <begin position="146"/>
        <end position="149"/>
    </location>
</feature>
<feature type="strand" evidence="13">
    <location>
        <begin position="151"/>
        <end position="153"/>
    </location>
</feature>